<reference key="1">
    <citation type="submission" date="2007-06" db="EMBL/GenBank/DDBJ databases">
        <authorList>
            <consortium name="NIH - Mammalian Gene Collection (MGC) project"/>
        </authorList>
    </citation>
    <scope>NUCLEOTIDE SEQUENCE [LARGE SCALE MRNA]</scope>
    <source>
        <strain>Hereford</strain>
        <tissue>Thymus</tissue>
    </source>
</reference>
<gene>
    <name type="primary">IGFLR1</name>
    <name type="synonym">TMEM149</name>
</gene>
<proteinExistence type="evidence at transcript level"/>
<comment type="function">
    <text evidence="1">Probable cell membrane receptor for the IGF-like family protein IGFL.</text>
</comment>
<comment type="subcellular location">
    <subcellularLocation>
        <location evidence="1">Cell membrane</location>
        <topology evidence="1">Single-pass membrane protein</topology>
    </subcellularLocation>
</comment>
<keyword id="KW-1003">Cell membrane</keyword>
<keyword id="KW-0472">Membrane</keyword>
<keyword id="KW-0675">Receptor</keyword>
<keyword id="KW-1185">Reference proteome</keyword>
<keyword id="KW-0732">Signal</keyword>
<keyword id="KW-0812">Transmembrane</keyword>
<keyword id="KW-1133">Transmembrane helix</keyword>
<dbReference type="EMBL" id="BC142051">
    <property type="protein sequence ID" value="AAI42052.1"/>
    <property type="molecule type" value="mRNA"/>
</dbReference>
<dbReference type="RefSeq" id="NP_001092637.1">
    <property type="nucleotide sequence ID" value="NM_001099167.2"/>
</dbReference>
<dbReference type="SMR" id="A5PJC7"/>
<dbReference type="FunCoup" id="A5PJC7">
    <property type="interactions" value="90"/>
</dbReference>
<dbReference type="STRING" id="9913.ENSBTAP00000057282"/>
<dbReference type="PaxDb" id="9913-ENSBTAP00000003585"/>
<dbReference type="GeneID" id="617594"/>
<dbReference type="KEGG" id="bta:617594"/>
<dbReference type="CTD" id="79713"/>
<dbReference type="VEuPathDB" id="HostDB:ENSBTAG00000002764"/>
<dbReference type="eggNOG" id="ENOG502RZ9Q">
    <property type="taxonomic scope" value="Eukaryota"/>
</dbReference>
<dbReference type="HOGENOM" id="CLU_877045_0_0_1"/>
<dbReference type="InParanoid" id="A5PJC7"/>
<dbReference type="OrthoDB" id="8945565at2759"/>
<dbReference type="TreeFam" id="TF338761"/>
<dbReference type="Proteomes" id="UP000009136">
    <property type="component" value="Chromosome 18"/>
</dbReference>
<dbReference type="Bgee" id="ENSBTAG00000002764">
    <property type="expression patterns" value="Expressed in mesenteric lymph node and 105 other cell types or tissues"/>
</dbReference>
<dbReference type="GO" id="GO:0005886">
    <property type="term" value="C:plasma membrane"/>
    <property type="evidence" value="ECO:0000250"/>
    <property type="project" value="UniProtKB"/>
</dbReference>
<dbReference type="FunFam" id="1.10.533.10:FF:000079">
    <property type="entry name" value="IGF like family receptor 1"/>
    <property type="match status" value="1"/>
</dbReference>
<dbReference type="Gene3D" id="1.10.533.10">
    <property type="entry name" value="Death Domain, Fas"/>
    <property type="match status" value="1"/>
</dbReference>
<dbReference type="InterPro" id="IPR011029">
    <property type="entry name" value="DEATH-like_dom_sf"/>
</dbReference>
<dbReference type="InterPro" id="IPR042355">
    <property type="entry name" value="IGFLR1"/>
</dbReference>
<dbReference type="PANTHER" id="PTHR14657">
    <property type="entry name" value="IGF-LIKE FAMILY RECEPTOR 1"/>
    <property type="match status" value="1"/>
</dbReference>
<dbReference type="PANTHER" id="PTHR14657:SF2">
    <property type="entry name" value="IGF-LIKE FAMILY RECEPTOR 1"/>
    <property type="match status" value="1"/>
</dbReference>
<dbReference type="SUPFAM" id="SSF47986">
    <property type="entry name" value="DEATH domain"/>
    <property type="match status" value="1"/>
</dbReference>
<sequence length="357" mass="38288">MGPLRLLPTAVLLLAQAAPWEASQHCGRLEYWNPDNRCCGSCLQRFGPPPCADLEFSENCGLDDAGNHVMHPFQECPPGQCNRNSAELCSLCGGGATAPIPSGSRGGTGRPCREPVPNKEPCPLTPGKSSILSSQEPSSPGIPSVSWTSEHKAPQQAWPSLSFALFLVLVLLVTSAIILLALQRHHRRLDQGKAVQHPYPSLVCSDLDTHTRFLHLSSPASLETSEARDSWKEVSLSPLLGREMPSLESQPLSRLLDELEVLEELILLLDPEPGPGGRMACGTTRHLAARYGLPAAWSTFAYSLRPSRSPLRALIEMVVAREPSASLGQLGTHLAQIGRADALQVLSKLGSSGACLA</sequence>
<accession>A5PJC7</accession>
<organism>
    <name type="scientific">Bos taurus</name>
    <name type="common">Bovine</name>
    <dbReference type="NCBI Taxonomy" id="9913"/>
    <lineage>
        <taxon>Eukaryota</taxon>
        <taxon>Metazoa</taxon>
        <taxon>Chordata</taxon>
        <taxon>Craniata</taxon>
        <taxon>Vertebrata</taxon>
        <taxon>Euteleostomi</taxon>
        <taxon>Mammalia</taxon>
        <taxon>Eutheria</taxon>
        <taxon>Laurasiatheria</taxon>
        <taxon>Artiodactyla</taxon>
        <taxon>Ruminantia</taxon>
        <taxon>Pecora</taxon>
        <taxon>Bovidae</taxon>
        <taxon>Bovinae</taxon>
        <taxon>Bos</taxon>
    </lineage>
</organism>
<evidence type="ECO:0000250" key="1"/>
<evidence type="ECO:0000255" key="2"/>
<evidence type="ECO:0000256" key="3">
    <source>
        <dbReference type="SAM" id="MobiDB-lite"/>
    </source>
</evidence>
<name>IGFR1_BOVIN</name>
<feature type="signal peptide" evidence="2">
    <location>
        <begin position="1"/>
        <end position="22"/>
    </location>
</feature>
<feature type="chain" id="PRO_0000409154" description="IGF-like family receptor 1">
    <location>
        <begin position="23"/>
        <end position="357"/>
    </location>
</feature>
<feature type="topological domain" description="Extracellular" evidence="2">
    <location>
        <begin position="23"/>
        <end position="160"/>
    </location>
</feature>
<feature type="transmembrane region" description="Helical" evidence="2">
    <location>
        <begin position="161"/>
        <end position="181"/>
    </location>
</feature>
<feature type="topological domain" description="Cytoplasmic" evidence="2">
    <location>
        <begin position="182"/>
        <end position="357"/>
    </location>
</feature>
<feature type="region of interest" description="Disordered" evidence="3">
    <location>
        <begin position="100"/>
        <end position="147"/>
    </location>
</feature>
<feature type="compositionally biased region" description="Low complexity" evidence="3">
    <location>
        <begin position="129"/>
        <end position="139"/>
    </location>
</feature>
<protein>
    <recommendedName>
        <fullName>IGF-like family receptor 1</fullName>
    </recommendedName>
    <alternativeName>
        <fullName>Transmembrane protein 149</fullName>
    </alternativeName>
</protein>